<reference key="1">
    <citation type="submission" date="2001-06" db="EMBL/GenBank/DDBJ databases">
        <title>The cardiac-MyBP-C associated Ca/CaM kinase is a novel MLCK with cardiac-specific domains.</title>
        <authorList>
            <person name="Mues A."/>
            <person name="Seidel R."/>
            <person name="Gautel M."/>
        </authorList>
    </citation>
    <scope>NUCLEOTIDE SEQUENCE [MRNA] (ISOFORM 1)</scope>
    <scope>VARIANT LEU-180</scope>
    <source>
        <tissue>Cardiac myocyte</tissue>
    </source>
</reference>
<reference key="2">
    <citation type="journal article" date="2004" name="Nat. Genet.">
        <title>Complete sequencing and characterization of 21,243 full-length human cDNAs.</title>
        <authorList>
            <person name="Ota T."/>
            <person name="Suzuki Y."/>
            <person name="Nishikawa T."/>
            <person name="Otsuki T."/>
            <person name="Sugiyama T."/>
            <person name="Irie R."/>
            <person name="Wakamatsu A."/>
            <person name="Hayashi K."/>
            <person name="Sato H."/>
            <person name="Nagai K."/>
            <person name="Kimura K."/>
            <person name="Makita H."/>
            <person name="Sekine M."/>
            <person name="Obayashi M."/>
            <person name="Nishi T."/>
            <person name="Shibahara T."/>
            <person name="Tanaka T."/>
            <person name="Ishii S."/>
            <person name="Yamamoto J."/>
            <person name="Saito K."/>
            <person name="Kawai Y."/>
            <person name="Isono Y."/>
            <person name="Nakamura Y."/>
            <person name="Nagahari K."/>
            <person name="Murakami K."/>
            <person name="Yasuda T."/>
            <person name="Iwayanagi T."/>
            <person name="Wagatsuma M."/>
            <person name="Shiratori A."/>
            <person name="Sudo H."/>
            <person name="Hosoiri T."/>
            <person name="Kaku Y."/>
            <person name="Kodaira H."/>
            <person name="Kondo H."/>
            <person name="Sugawara M."/>
            <person name="Takahashi M."/>
            <person name="Kanda K."/>
            <person name="Yokoi T."/>
            <person name="Furuya T."/>
            <person name="Kikkawa E."/>
            <person name="Omura Y."/>
            <person name="Abe K."/>
            <person name="Kamihara K."/>
            <person name="Katsuta N."/>
            <person name="Sato K."/>
            <person name="Tanikawa M."/>
            <person name="Yamazaki M."/>
            <person name="Ninomiya K."/>
            <person name="Ishibashi T."/>
            <person name="Yamashita H."/>
            <person name="Murakawa K."/>
            <person name="Fujimori K."/>
            <person name="Tanai H."/>
            <person name="Kimata M."/>
            <person name="Watanabe M."/>
            <person name="Hiraoka S."/>
            <person name="Chiba Y."/>
            <person name="Ishida S."/>
            <person name="Ono Y."/>
            <person name="Takiguchi S."/>
            <person name="Watanabe S."/>
            <person name="Yosida M."/>
            <person name="Hotuta T."/>
            <person name="Kusano J."/>
            <person name="Kanehori K."/>
            <person name="Takahashi-Fujii A."/>
            <person name="Hara H."/>
            <person name="Tanase T.-O."/>
            <person name="Nomura Y."/>
            <person name="Togiya S."/>
            <person name="Komai F."/>
            <person name="Hara R."/>
            <person name="Takeuchi K."/>
            <person name="Arita M."/>
            <person name="Imose N."/>
            <person name="Musashino K."/>
            <person name="Yuuki H."/>
            <person name="Oshima A."/>
            <person name="Sasaki N."/>
            <person name="Aotsuka S."/>
            <person name="Yoshikawa Y."/>
            <person name="Matsunawa H."/>
            <person name="Ichihara T."/>
            <person name="Shiohata N."/>
            <person name="Sano S."/>
            <person name="Moriya S."/>
            <person name="Momiyama H."/>
            <person name="Satoh N."/>
            <person name="Takami S."/>
            <person name="Terashima Y."/>
            <person name="Suzuki O."/>
            <person name="Nakagawa S."/>
            <person name="Senoh A."/>
            <person name="Mizoguchi H."/>
            <person name="Goto Y."/>
            <person name="Shimizu F."/>
            <person name="Wakebe H."/>
            <person name="Hishigaki H."/>
            <person name="Watanabe T."/>
            <person name="Sugiyama A."/>
            <person name="Takemoto M."/>
            <person name="Kawakami B."/>
            <person name="Yamazaki M."/>
            <person name="Watanabe K."/>
            <person name="Kumagai A."/>
            <person name="Itakura S."/>
            <person name="Fukuzumi Y."/>
            <person name="Fujimori Y."/>
            <person name="Komiyama M."/>
            <person name="Tashiro H."/>
            <person name="Tanigami A."/>
            <person name="Fujiwara T."/>
            <person name="Ono T."/>
            <person name="Yamada K."/>
            <person name="Fujii Y."/>
            <person name="Ozaki K."/>
            <person name="Hirao M."/>
            <person name="Ohmori Y."/>
            <person name="Kawabata A."/>
            <person name="Hikiji T."/>
            <person name="Kobatake N."/>
            <person name="Inagaki H."/>
            <person name="Ikema Y."/>
            <person name="Okamoto S."/>
            <person name="Okitani R."/>
            <person name="Kawakami T."/>
            <person name="Noguchi S."/>
            <person name="Itoh T."/>
            <person name="Shigeta K."/>
            <person name="Senba T."/>
            <person name="Matsumura K."/>
            <person name="Nakajima Y."/>
            <person name="Mizuno T."/>
            <person name="Morinaga M."/>
            <person name="Sasaki M."/>
            <person name="Togashi T."/>
            <person name="Oyama M."/>
            <person name="Hata H."/>
            <person name="Watanabe M."/>
            <person name="Komatsu T."/>
            <person name="Mizushima-Sugano J."/>
            <person name="Satoh T."/>
            <person name="Shirai Y."/>
            <person name="Takahashi Y."/>
            <person name="Nakagawa K."/>
            <person name="Okumura K."/>
            <person name="Nagase T."/>
            <person name="Nomura N."/>
            <person name="Kikuchi H."/>
            <person name="Masuho Y."/>
            <person name="Yamashita R."/>
            <person name="Nakai K."/>
            <person name="Yada T."/>
            <person name="Nakamura Y."/>
            <person name="Ohara O."/>
            <person name="Isogai T."/>
            <person name="Sugano S."/>
        </authorList>
    </citation>
    <scope>NUCLEOTIDE SEQUENCE [LARGE SCALE MRNA] (ISOFORM 2)</scope>
    <source>
        <tissue>Tongue</tissue>
    </source>
</reference>
<reference key="3">
    <citation type="journal article" date="2008" name="Nat. Methods">
        <title>Human protein factory for converting the transcriptome into an in vitro-expressed proteome.</title>
        <authorList>
            <person name="Goshima N."/>
            <person name="Kawamura Y."/>
            <person name="Fukumoto A."/>
            <person name="Miura A."/>
            <person name="Honma R."/>
            <person name="Satoh R."/>
            <person name="Wakamatsu A."/>
            <person name="Yamamoto J."/>
            <person name="Kimura K."/>
            <person name="Nishikawa T."/>
            <person name="Andoh T."/>
            <person name="Iida Y."/>
            <person name="Ishikawa K."/>
            <person name="Ito E."/>
            <person name="Kagawa N."/>
            <person name="Kaminaga C."/>
            <person name="Kanehori K."/>
            <person name="Kawakami B."/>
            <person name="Kenmochi K."/>
            <person name="Kimura R."/>
            <person name="Kobayashi M."/>
            <person name="Kuroita T."/>
            <person name="Kuwayama H."/>
            <person name="Maruyama Y."/>
            <person name="Matsuo K."/>
            <person name="Minami K."/>
            <person name="Mitsubori M."/>
            <person name="Mori M."/>
            <person name="Morishita R."/>
            <person name="Murase A."/>
            <person name="Nishikawa A."/>
            <person name="Nishikawa S."/>
            <person name="Okamoto T."/>
            <person name="Sakagami N."/>
            <person name="Sakamoto Y."/>
            <person name="Sasaki Y."/>
            <person name="Seki T."/>
            <person name="Sono S."/>
            <person name="Sugiyama A."/>
            <person name="Sumiya T."/>
            <person name="Takayama T."/>
            <person name="Takayama Y."/>
            <person name="Takeda H."/>
            <person name="Togashi T."/>
            <person name="Yahata K."/>
            <person name="Yamada H."/>
            <person name="Yanagisawa Y."/>
            <person name="Endo Y."/>
            <person name="Imamoto F."/>
            <person name="Kisu Y."/>
            <person name="Tanaka S."/>
            <person name="Isogai T."/>
            <person name="Imai J."/>
            <person name="Watanabe S."/>
            <person name="Nomura N."/>
        </authorList>
    </citation>
    <scope>NUCLEOTIDE SEQUENCE [LARGE SCALE MRNA] (ISOFORM 1)</scope>
</reference>
<reference key="4">
    <citation type="journal article" date="2004" name="Nature">
        <title>The sequence and analysis of duplication-rich human chromosome 16.</title>
        <authorList>
            <person name="Martin J."/>
            <person name="Han C."/>
            <person name="Gordon L.A."/>
            <person name="Terry A."/>
            <person name="Prabhakar S."/>
            <person name="She X."/>
            <person name="Xie G."/>
            <person name="Hellsten U."/>
            <person name="Chan Y.M."/>
            <person name="Altherr M."/>
            <person name="Couronne O."/>
            <person name="Aerts A."/>
            <person name="Bajorek E."/>
            <person name="Black S."/>
            <person name="Blumer H."/>
            <person name="Branscomb E."/>
            <person name="Brown N.C."/>
            <person name="Bruno W.J."/>
            <person name="Buckingham J.M."/>
            <person name="Callen D.F."/>
            <person name="Campbell C.S."/>
            <person name="Campbell M.L."/>
            <person name="Campbell E.W."/>
            <person name="Caoile C."/>
            <person name="Challacombe J.F."/>
            <person name="Chasteen L.A."/>
            <person name="Chertkov O."/>
            <person name="Chi H.C."/>
            <person name="Christensen M."/>
            <person name="Clark L.M."/>
            <person name="Cohn J.D."/>
            <person name="Denys M."/>
            <person name="Detter J.C."/>
            <person name="Dickson M."/>
            <person name="Dimitrijevic-Bussod M."/>
            <person name="Escobar J."/>
            <person name="Fawcett J.J."/>
            <person name="Flowers D."/>
            <person name="Fotopulos D."/>
            <person name="Glavina T."/>
            <person name="Gomez M."/>
            <person name="Gonzales E."/>
            <person name="Goodstein D."/>
            <person name="Goodwin L.A."/>
            <person name="Grady D.L."/>
            <person name="Grigoriev I."/>
            <person name="Groza M."/>
            <person name="Hammon N."/>
            <person name="Hawkins T."/>
            <person name="Haydu L."/>
            <person name="Hildebrand C.E."/>
            <person name="Huang W."/>
            <person name="Israni S."/>
            <person name="Jett J."/>
            <person name="Jewett P.B."/>
            <person name="Kadner K."/>
            <person name="Kimball H."/>
            <person name="Kobayashi A."/>
            <person name="Krawczyk M.-C."/>
            <person name="Leyba T."/>
            <person name="Longmire J.L."/>
            <person name="Lopez F."/>
            <person name="Lou Y."/>
            <person name="Lowry S."/>
            <person name="Ludeman T."/>
            <person name="Manohar C.F."/>
            <person name="Mark G.A."/>
            <person name="McMurray K.L."/>
            <person name="Meincke L.J."/>
            <person name="Morgan J."/>
            <person name="Moyzis R.K."/>
            <person name="Mundt M.O."/>
            <person name="Munk A.C."/>
            <person name="Nandkeshwar R.D."/>
            <person name="Pitluck S."/>
            <person name="Pollard M."/>
            <person name="Predki P."/>
            <person name="Parson-Quintana B."/>
            <person name="Ramirez L."/>
            <person name="Rash S."/>
            <person name="Retterer J."/>
            <person name="Ricke D.O."/>
            <person name="Robinson D.L."/>
            <person name="Rodriguez A."/>
            <person name="Salamov A."/>
            <person name="Saunders E.H."/>
            <person name="Scott D."/>
            <person name="Shough T."/>
            <person name="Stallings R.L."/>
            <person name="Stalvey M."/>
            <person name="Sutherland R.D."/>
            <person name="Tapia R."/>
            <person name="Tesmer J.G."/>
            <person name="Thayer N."/>
            <person name="Thompson L.S."/>
            <person name="Tice H."/>
            <person name="Torney D.C."/>
            <person name="Tran-Gyamfi M."/>
            <person name="Tsai M."/>
            <person name="Ulanovsky L.E."/>
            <person name="Ustaszewska A."/>
            <person name="Vo N."/>
            <person name="White P.S."/>
            <person name="Williams A.L."/>
            <person name="Wills P.L."/>
            <person name="Wu J.-R."/>
            <person name="Wu K."/>
            <person name="Yang J."/>
            <person name="DeJong P."/>
            <person name="Bruce D."/>
            <person name="Doggett N.A."/>
            <person name="Deaven L."/>
            <person name="Schmutz J."/>
            <person name="Grimwood J."/>
            <person name="Richardson P."/>
            <person name="Rokhsar D.S."/>
            <person name="Eichler E.E."/>
            <person name="Gilna P."/>
            <person name="Lucas S.M."/>
            <person name="Myers R.M."/>
            <person name="Rubin E.M."/>
            <person name="Pennacchio L.A."/>
        </authorList>
    </citation>
    <scope>NUCLEOTIDE SEQUENCE [LARGE SCALE GENOMIC DNA]</scope>
</reference>
<reference key="5">
    <citation type="journal article" date="2004" name="Genome Res.">
        <title>The status, quality, and expansion of the NIH full-length cDNA project: the Mammalian Gene Collection (MGC).</title>
        <authorList>
            <consortium name="The MGC Project Team"/>
        </authorList>
    </citation>
    <scope>NUCLEOTIDE SEQUENCE [LARGE SCALE MRNA] (ISOFORM 1)</scope>
    <scope>VARIANT LEU-180</scope>
</reference>
<reference key="6">
    <citation type="journal article" date="2007" name="J. Clin. Invest.">
        <title>A cardiac myosin light chain kinase regulates sarcomere assembly in the vertebrate heart.</title>
        <authorList>
            <person name="Seguchi O."/>
            <person name="Takashima S."/>
            <person name="Yamazaki S."/>
            <person name="Asakura M."/>
            <person name="Asano Y."/>
            <person name="Shintani Y."/>
            <person name="Wakeno M."/>
            <person name="Minamino T."/>
            <person name="Kondo H."/>
            <person name="Furukawa H."/>
            <person name="Nakamaru K."/>
            <person name="Naito A."/>
            <person name="Takahashi T."/>
            <person name="Ohtsuka T."/>
            <person name="Kawakami K."/>
            <person name="Isomura T."/>
            <person name="Kitamura S."/>
            <person name="Tomoike H."/>
            <person name="Mochizuki N."/>
            <person name="Kitakaze M."/>
        </authorList>
    </citation>
    <scope>TISSUE SPECIFICITY</scope>
</reference>
<reference key="7">
    <citation type="journal article" date="2013" name="J. Proteome Res.">
        <title>Toward a comprehensive characterization of a human cancer cell phosphoproteome.</title>
        <authorList>
            <person name="Zhou H."/>
            <person name="Di Palma S."/>
            <person name="Preisinger C."/>
            <person name="Peng M."/>
            <person name="Polat A.N."/>
            <person name="Heck A.J."/>
            <person name="Mohammed S."/>
        </authorList>
    </citation>
    <scope>PHOSPHORYLATION [LARGE SCALE ANALYSIS] AT SER-401 AND SER-408</scope>
    <scope>IDENTIFICATION BY MASS SPECTROMETRY [LARGE SCALE ANALYSIS]</scope>
    <source>
        <tissue>Erythroleukemia</tissue>
    </source>
</reference>
<reference key="8">
    <citation type="journal article" date="2006" name="Science">
        <title>The consensus coding sequences of human breast and colorectal cancers.</title>
        <authorList>
            <person name="Sjoeblom T."/>
            <person name="Jones S."/>
            <person name="Wood L.D."/>
            <person name="Parsons D.W."/>
            <person name="Lin J."/>
            <person name="Barber T.D."/>
            <person name="Mandelker D."/>
            <person name="Leary R.J."/>
            <person name="Ptak J."/>
            <person name="Silliman N."/>
            <person name="Szabo S."/>
            <person name="Buckhaults P."/>
            <person name="Farrell C."/>
            <person name="Meeh P."/>
            <person name="Markowitz S.D."/>
            <person name="Willis J."/>
            <person name="Dawson D."/>
            <person name="Willson J.K.V."/>
            <person name="Gazdar A.F."/>
            <person name="Hartigan J."/>
            <person name="Wu L."/>
            <person name="Liu C."/>
            <person name="Parmigiani G."/>
            <person name="Park B.H."/>
            <person name="Bachman K.E."/>
            <person name="Papadopoulos N."/>
            <person name="Vogelstein B."/>
            <person name="Kinzler K.W."/>
            <person name="Velculescu V.E."/>
        </authorList>
    </citation>
    <scope>VARIANT [LARGE SCALE ANALYSIS] ARG-390</scope>
</reference>
<evidence type="ECO:0000250" key="1"/>
<evidence type="ECO:0000250" key="2">
    <source>
        <dbReference type="UniProtKB" id="E9PT87"/>
    </source>
</evidence>
<evidence type="ECO:0000255" key="3">
    <source>
        <dbReference type="PROSITE-ProRule" id="PRU00159"/>
    </source>
</evidence>
<evidence type="ECO:0000255" key="4">
    <source>
        <dbReference type="PROSITE-ProRule" id="PRU10027"/>
    </source>
</evidence>
<evidence type="ECO:0000256" key="5">
    <source>
        <dbReference type="SAM" id="MobiDB-lite"/>
    </source>
</evidence>
<evidence type="ECO:0000269" key="6">
    <source>
    </source>
</evidence>
<evidence type="ECO:0000269" key="7">
    <source>
    </source>
</evidence>
<evidence type="ECO:0000269" key="8">
    <source>
    </source>
</evidence>
<evidence type="ECO:0000269" key="9">
    <source ref="1"/>
</evidence>
<evidence type="ECO:0000303" key="10">
    <source>
    </source>
</evidence>
<evidence type="ECO:0000305" key="11"/>
<evidence type="ECO:0007744" key="12">
    <source>
    </source>
</evidence>
<organism>
    <name type="scientific">Homo sapiens</name>
    <name type="common">Human</name>
    <dbReference type="NCBI Taxonomy" id="9606"/>
    <lineage>
        <taxon>Eukaryota</taxon>
        <taxon>Metazoa</taxon>
        <taxon>Chordata</taxon>
        <taxon>Craniata</taxon>
        <taxon>Vertebrata</taxon>
        <taxon>Euteleostomi</taxon>
        <taxon>Mammalia</taxon>
        <taxon>Eutheria</taxon>
        <taxon>Euarchontoglires</taxon>
        <taxon>Primates</taxon>
        <taxon>Haplorrhini</taxon>
        <taxon>Catarrhini</taxon>
        <taxon>Hominidae</taxon>
        <taxon>Homo</taxon>
    </lineage>
</organism>
<comment type="function">
    <text evidence="1">Kinase that phosphorylates MYL2 in vitro. Promotes sarcomere formation in cardiomyocytes and increases cardiomyocyte contractility (By similarity).</text>
</comment>
<comment type="catalytic activity">
    <reaction>
        <text>L-seryl-[myosin light chain] + ATP = O-phospho-L-seryl-[myosin light chain] + ADP + H(+)</text>
        <dbReference type="Rhea" id="RHEA:22004"/>
        <dbReference type="Rhea" id="RHEA-COMP:13684"/>
        <dbReference type="Rhea" id="RHEA-COMP:13685"/>
        <dbReference type="ChEBI" id="CHEBI:15378"/>
        <dbReference type="ChEBI" id="CHEBI:29999"/>
        <dbReference type="ChEBI" id="CHEBI:30616"/>
        <dbReference type="ChEBI" id="CHEBI:83421"/>
        <dbReference type="ChEBI" id="CHEBI:456216"/>
        <dbReference type="EC" id="2.7.11.18"/>
    </reaction>
</comment>
<comment type="catalytic activity">
    <reaction>
        <text>L-threonyl-[myosin light chain] + ATP = O-phospho-L-threonyl-[myosin light chain] + ADP + H(+)</text>
        <dbReference type="Rhea" id="RHEA:53900"/>
        <dbReference type="Rhea" id="RHEA-COMP:13686"/>
        <dbReference type="Rhea" id="RHEA-COMP:13687"/>
        <dbReference type="ChEBI" id="CHEBI:15378"/>
        <dbReference type="ChEBI" id="CHEBI:30013"/>
        <dbReference type="ChEBI" id="CHEBI:30616"/>
        <dbReference type="ChEBI" id="CHEBI:61977"/>
        <dbReference type="ChEBI" id="CHEBI:456216"/>
        <dbReference type="EC" id="2.7.11.18"/>
    </reaction>
</comment>
<comment type="cofactor">
    <cofactor evidence="1">
        <name>Mg(2+)</name>
        <dbReference type="ChEBI" id="CHEBI:18420"/>
    </cofactor>
</comment>
<comment type="interaction">
    <interactant intactId="EBI-1222801">
        <id>Q32MK0</id>
    </interactant>
    <interactant intactId="EBI-356498">
        <id>P62258</id>
        <label>YWHAE</label>
    </interactant>
    <organismsDiffer>false</organismsDiffer>
    <experiments>2</experiments>
</comment>
<comment type="subcellular location">
    <subcellularLocation>
        <location evidence="1">Cytoplasm</location>
    </subcellularLocation>
</comment>
<comment type="alternative products">
    <event type="alternative splicing"/>
    <isoform>
        <id>Q32MK0-3</id>
        <name>1</name>
        <sequence type="displayed"/>
    </isoform>
    <isoform>
        <id>Q32MK0-4</id>
        <name>2</name>
        <sequence type="described" ref="VSP_044312"/>
    </isoform>
</comment>
<comment type="tissue specificity">
    <text evidence="8">Restricted to heart.</text>
</comment>
<comment type="PTM">
    <text evidence="1">Phosphorylated on serine residues.</text>
</comment>
<comment type="similarity">
    <text evidence="11">Belongs to the protein kinase superfamily. CAMK Ser/Thr protein kinase family.</text>
</comment>
<comment type="sequence caution" evidence="11">
    <conflict type="erroneous initiation">
        <sequence resource="EMBL-CDS" id="AAI09098"/>
    </conflict>
    <text>Truncated N-terminus.</text>
</comment>
<comment type="sequence caution" evidence="11">
    <conflict type="erroneous initiation">
        <sequence resource="EMBL-CDS" id="CAC42766"/>
    </conflict>
    <text>Truncated N-terminus.</text>
</comment>
<accession>Q32MK0</accession>
<accession>B5BUL9</accession>
<accession>B7Z5U8</accession>
<accession>Q32MK1</accession>
<accession>Q96DV1</accession>
<dbReference type="EC" id="2.7.11.18"/>
<dbReference type="EMBL" id="AJ247087">
    <property type="protein sequence ID" value="CAC42766.1"/>
    <property type="status" value="ALT_INIT"/>
    <property type="molecule type" value="mRNA"/>
</dbReference>
<dbReference type="EMBL" id="AK299443">
    <property type="protein sequence ID" value="BAH13034.1"/>
    <property type="molecule type" value="mRNA"/>
</dbReference>
<dbReference type="EMBL" id="AB451455">
    <property type="protein sequence ID" value="BAG70269.1"/>
    <property type="molecule type" value="mRNA"/>
</dbReference>
<dbReference type="EMBL" id="AC007225">
    <property type="status" value="NOT_ANNOTATED_CDS"/>
    <property type="molecule type" value="Genomic_DNA"/>
</dbReference>
<dbReference type="EMBL" id="BC109097">
    <property type="protein sequence ID" value="AAI09098.2"/>
    <property type="status" value="ALT_INIT"/>
    <property type="molecule type" value="mRNA"/>
</dbReference>
<dbReference type="CCDS" id="CCDS10723.2">
    <molecule id="Q32MK0-3"/>
</dbReference>
<dbReference type="CCDS" id="CCDS76861.1">
    <molecule id="Q32MK0-4"/>
</dbReference>
<dbReference type="RefSeq" id="NP_001295230.1">
    <molecule id="Q32MK0-4"/>
    <property type="nucleotide sequence ID" value="NM_001308301.1"/>
</dbReference>
<dbReference type="RefSeq" id="NP_872299.2">
    <molecule id="Q32MK0-3"/>
    <property type="nucleotide sequence ID" value="NM_182493.3"/>
</dbReference>
<dbReference type="RefSeq" id="XP_006721397.1">
    <property type="nucleotide sequence ID" value="XM_006721334.3"/>
</dbReference>
<dbReference type="SMR" id="Q32MK0"/>
<dbReference type="BioGRID" id="124881">
    <property type="interactions" value="11"/>
</dbReference>
<dbReference type="FunCoup" id="Q32MK0">
    <property type="interactions" value="1606"/>
</dbReference>
<dbReference type="IntAct" id="Q32MK0">
    <property type="interactions" value="10"/>
</dbReference>
<dbReference type="STRING" id="9606.ENSP00000378288"/>
<dbReference type="BindingDB" id="Q32MK0"/>
<dbReference type="ChEMBL" id="CHEMBL4627"/>
<dbReference type="DrugBank" id="DB12010">
    <property type="generic name" value="Fostamatinib"/>
</dbReference>
<dbReference type="DrugCentral" id="Q32MK0"/>
<dbReference type="iPTMnet" id="Q32MK0"/>
<dbReference type="PhosphoSitePlus" id="Q32MK0"/>
<dbReference type="BioMuta" id="MYLK3"/>
<dbReference type="DMDM" id="254763411"/>
<dbReference type="jPOST" id="Q32MK0"/>
<dbReference type="MassIVE" id="Q32MK0"/>
<dbReference type="PaxDb" id="9606-ENSP00000378288"/>
<dbReference type="PeptideAtlas" id="Q32MK0"/>
<dbReference type="ProteomicsDB" id="61603">
    <molecule id="Q32MK0-3"/>
</dbReference>
<dbReference type="ProteomicsDB" id="6721"/>
<dbReference type="Pumba" id="Q32MK0"/>
<dbReference type="Antibodypedia" id="28053">
    <property type="antibodies" value="267 antibodies from 27 providers"/>
</dbReference>
<dbReference type="DNASU" id="91807"/>
<dbReference type="Ensembl" id="ENST00000394809.9">
    <molecule id="Q32MK0-3"/>
    <property type="protein sequence ID" value="ENSP00000378288.4"/>
    <property type="gene ID" value="ENSG00000140795.13"/>
</dbReference>
<dbReference type="Ensembl" id="ENST00000536476.5">
    <molecule id="Q32MK0-4"/>
    <property type="protein sequence ID" value="ENSP00000439297.1"/>
    <property type="gene ID" value="ENSG00000140795.13"/>
</dbReference>
<dbReference type="GeneID" id="91807"/>
<dbReference type="KEGG" id="hsa:91807"/>
<dbReference type="MANE-Select" id="ENST00000394809.9">
    <property type="protein sequence ID" value="ENSP00000378288.4"/>
    <property type="RefSeq nucleotide sequence ID" value="NM_182493.3"/>
    <property type="RefSeq protein sequence ID" value="NP_872299.2"/>
</dbReference>
<dbReference type="UCSC" id="uc002eei.5">
    <molecule id="Q32MK0-3"/>
    <property type="organism name" value="human"/>
</dbReference>
<dbReference type="AGR" id="HGNC:29826"/>
<dbReference type="CTD" id="91807"/>
<dbReference type="DisGeNET" id="91807"/>
<dbReference type="GeneCards" id="MYLK3"/>
<dbReference type="HGNC" id="HGNC:29826">
    <property type="gene designation" value="MYLK3"/>
</dbReference>
<dbReference type="HPA" id="ENSG00000140795">
    <property type="expression patterns" value="Group enriched (heart muscle, skeletal muscle, tongue)"/>
</dbReference>
<dbReference type="MalaCards" id="MYLK3"/>
<dbReference type="MIM" id="612147">
    <property type="type" value="gene"/>
</dbReference>
<dbReference type="neXtProt" id="NX_Q32MK0"/>
<dbReference type="OpenTargets" id="ENSG00000140795"/>
<dbReference type="PharmGKB" id="PA162396375"/>
<dbReference type="VEuPathDB" id="HostDB:ENSG00000140795"/>
<dbReference type="eggNOG" id="KOG0032">
    <property type="taxonomic scope" value="Eukaryota"/>
</dbReference>
<dbReference type="GeneTree" id="ENSGT00940000160007"/>
<dbReference type="HOGENOM" id="CLU_000288_90_0_1"/>
<dbReference type="InParanoid" id="Q32MK0"/>
<dbReference type="OMA" id="IHVQEMD"/>
<dbReference type="OrthoDB" id="10260894at2759"/>
<dbReference type="PAN-GO" id="Q32MK0">
    <property type="GO annotations" value="5 GO annotations based on evolutionary models"/>
</dbReference>
<dbReference type="PhylomeDB" id="Q32MK0"/>
<dbReference type="TreeFam" id="TF314166"/>
<dbReference type="PathwayCommons" id="Q32MK0"/>
<dbReference type="SignaLink" id="Q32MK0"/>
<dbReference type="SIGNOR" id="Q32MK0"/>
<dbReference type="BioGRID-ORCS" id="91807">
    <property type="hits" value="16 hits in 1185 CRISPR screens"/>
</dbReference>
<dbReference type="ChiTaRS" id="MYLK3">
    <property type="organism name" value="human"/>
</dbReference>
<dbReference type="GeneWiki" id="MYLK3"/>
<dbReference type="GenomeRNAi" id="91807"/>
<dbReference type="Pharos" id="Q32MK0">
    <property type="development level" value="Tchem"/>
</dbReference>
<dbReference type="PRO" id="PR:Q32MK0"/>
<dbReference type="Proteomes" id="UP000005640">
    <property type="component" value="Chromosome 16"/>
</dbReference>
<dbReference type="RNAct" id="Q32MK0">
    <property type="molecule type" value="protein"/>
</dbReference>
<dbReference type="Bgee" id="ENSG00000140795">
    <property type="expression patterns" value="Expressed in cardiac muscle of right atrium and 139 other cell types or tissues"/>
</dbReference>
<dbReference type="GO" id="GO:0015629">
    <property type="term" value="C:actin cytoskeleton"/>
    <property type="evidence" value="ECO:0007669"/>
    <property type="project" value="Ensembl"/>
</dbReference>
<dbReference type="GO" id="GO:0005737">
    <property type="term" value="C:cytoplasm"/>
    <property type="evidence" value="ECO:0000250"/>
    <property type="project" value="BHF-UCL"/>
</dbReference>
<dbReference type="GO" id="GO:0005829">
    <property type="term" value="C:cytosol"/>
    <property type="evidence" value="ECO:0000250"/>
    <property type="project" value="BHF-UCL"/>
</dbReference>
<dbReference type="GO" id="GO:0005524">
    <property type="term" value="F:ATP binding"/>
    <property type="evidence" value="ECO:0007669"/>
    <property type="project" value="UniProtKB-KW"/>
</dbReference>
<dbReference type="GO" id="GO:0004683">
    <property type="term" value="F:calcium/calmodulin-dependent protein kinase activity"/>
    <property type="evidence" value="ECO:0000250"/>
    <property type="project" value="BHF-UCL"/>
</dbReference>
<dbReference type="GO" id="GO:0004687">
    <property type="term" value="F:myosin light chain kinase activity"/>
    <property type="evidence" value="ECO:0000250"/>
    <property type="project" value="BHF-UCL"/>
</dbReference>
<dbReference type="GO" id="GO:0055003">
    <property type="term" value="P:cardiac myofibril assembly"/>
    <property type="evidence" value="ECO:0000250"/>
    <property type="project" value="BHF-UCL"/>
</dbReference>
<dbReference type="GO" id="GO:0071347">
    <property type="term" value="P:cellular response to interleukin-1"/>
    <property type="evidence" value="ECO:0000315"/>
    <property type="project" value="BHF-UCL"/>
</dbReference>
<dbReference type="GO" id="GO:1905710">
    <property type="term" value="P:positive regulation of membrane permeability"/>
    <property type="evidence" value="ECO:0000315"/>
    <property type="project" value="BHF-UCL"/>
</dbReference>
<dbReference type="GO" id="GO:0060298">
    <property type="term" value="P:positive regulation of sarcomere organization"/>
    <property type="evidence" value="ECO:0000250"/>
    <property type="project" value="BHF-UCL"/>
</dbReference>
<dbReference type="GO" id="GO:1905075">
    <property type="term" value="P:positive regulation of tight junction disassembly"/>
    <property type="evidence" value="ECO:0000315"/>
    <property type="project" value="BHF-UCL"/>
</dbReference>
<dbReference type="GO" id="GO:0045214">
    <property type="term" value="P:sarcomere organization"/>
    <property type="evidence" value="ECO:0000250"/>
    <property type="project" value="BHF-UCL"/>
</dbReference>
<dbReference type="GO" id="GO:0048769">
    <property type="term" value="P:sarcomerogenesis"/>
    <property type="evidence" value="ECO:0000250"/>
    <property type="project" value="BHF-UCL"/>
</dbReference>
<dbReference type="GO" id="GO:0007165">
    <property type="term" value="P:signal transduction"/>
    <property type="evidence" value="ECO:0000318"/>
    <property type="project" value="GO_Central"/>
</dbReference>
<dbReference type="CDD" id="cd14192">
    <property type="entry name" value="STKc_MLCK3"/>
    <property type="match status" value="1"/>
</dbReference>
<dbReference type="FunFam" id="3.30.200.20:FF:000196">
    <property type="entry name" value="Myosin light chain kinase family, member 4"/>
    <property type="match status" value="1"/>
</dbReference>
<dbReference type="FunFam" id="1.10.510.10:FF:000135">
    <property type="entry name" value="Putative myosin light chain kinase 3"/>
    <property type="match status" value="1"/>
</dbReference>
<dbReference type="Gene3D" id="3.30.200.20">
    <property type="entry name" value="Phosphorylase Kinase, domain 1"/>
    <property type="match status" value="1"/>
</dbReference>
<dbReference type="Gene3D" id="1.10.510.10">
    <property type="entry name" value="Transferase(Phosphotransferase) domain 1"/>
    <property type="match status" value="1"/>
</dbReference>
<dbReference type="InterPro" id="IPR011009">
    <property type="entry name" value="Kinase-like_dom_sf"/>
</dbReference>
<dbReference type="InterPro" id="IPR000719">
    <property type="entry name" value="Prot_kinase_dom"/>
</dbReference>
<dbReference type="InterPro" id="IPR017441">
    <property type="entry name" value="Protein_kinase_ATP_BS"/>
</dbReference>
<dbReference type="InterPro" id="IPR008271">
    <property type="entry name" value="Ser/Thr_kinase_AS"/>
</dbReference>
<dbReference type="PANTHER" id="PTHR24342:SF20">
    <property type="entry name" value="MYOSIN LIGHT CHAIN KINASE, SMOOTH MUSCLE"/>
    <property type="match status" value="1"/>
</dbReference>
<dbReference type="PANTHER" id="PTHR24342">
    <property type="entry name" value="SERINE/THREONINE-PROTEIN KINASE 17"/>
    <property type="match status" value="1"/>
</dbReference>
<dbReference type="Pfam" id="PF00069">
    <property type="entry name" value="Pkinase"/>
    <property type="match status" value="1"/>
</dbReference>
<dbReference type="SMART" id="SM00220">
    <property type="entry name" value="S_TKc"/>
    <property type="match status" value="1"/>
</dbReference>
<dbReference type="SUPFAM" id="SSF56112">
    <property type="entry name" value="Protein kinase-like (PK-like)"/>
    <property type="match status" value="1"/>
</dbReference>
<dbReference type="PROSITE" id="PS00107">
    <property type="entry name" value="PROTEIN_KINASE_ATP"/>
    <property type="match status" value="1"/>
</dbReference>
<dbReference type="PROSITE" id="PS50011">
    <property type="entry name" value="PROTEIN_KINASE_DOM"/>
    <property type="match status" value="1"/>
</dbReference>
<dbReference type="PROSITE" id="PS00108">
    <property type="entry name" value="PROTEIN_KINASE_ST"/>
    <property type="match status" value="1"/>
</dbReference>
<name>MYLK3_HUMAN</name>
<proteinExistence type="evidence at protein level"/>
<keyword id="KW-0025">Alternative splicing</keyword>
<keyword id="KW-0067">ATP-binding</keyword>
<keyword id="KW-0963">Cytoplasm</keyword>
<keyword id="KW-0418">Kinase</keyword>
<keyword id="KW-0460">Magnesium</keyword>
<keyword id="KW-0547">Nucleotide-binding</keyword>
<keyword id="KW-0597">Phosphoprotein</keyword>
<keyword id="KW-1267">Proteomics identification</keyword>
<keyword id="KW-1185">Reference proteome</keyword>
<keyword id="KW-0723">Serine/threonine-protein kinase</keyword>
<keyword id="KW-0808">Transferase</keyword>
<protein>
    <recommendedName>
        <fullName>Myosin light chain kinase 3</fullName>
        <ecNumber>2.7.11.18</ecNumber>
    </recommendedName>
    <alternativeName>
        <fullName>Cardiac-MyBP-C-associated Ca/CaM kinase</fullName>
        <shortName>Cardiac-MLCK</shortName>
    </alternativeName>
</protein>
<gene>
    <name type="primary">MYLK3</name>
    <name type="synonym">MLCK</name>
</gene>
<sequence>MSGTSKESLGHGGLPGLGKTCLTTMDTKLNMLNEKVDQLLHFQEDVTEKLQSMCRDMGHLERGLHRLEASRAPGPGGADGVPHIDTQAGWPEVLELVRAMQQDAAQHGARLEALFRMVAAVDRAIALVGATFQKSKVADFLMQGRVPWRRGSPGDSPEENKERVEEEGGKPKHVLSTSGVQSDAREPGEESQKADVLEGTAERLPPIRASGLGADPAQAVVSPGQGDGVPGPAQAFPGHLPLPTKVEAKAPETPSENLRTGLELAPAPGRVNVVSPSLEVAPGAGQGASSSRPDPEPLEEGTRLTPGPGPQCPGPPGLPAQARATHSGGETPPRISIHIQEMDTPGEMLMTGRGSLGPTLTTEAPAAAQPGKQGPPGTGRCLQAPGTEPGEQTPEGARELSPLQESSSPGGVKAEEEQRAGAEPGTRPSLARSDDNDHEVGALGLQQGKSPGAGNPEPEQDCAARAPVRAEAVRRMPPGAEAGSVVLDDSPAPPAPFEHRVVSVKETSISAGYEVCQHEVLGGGRFGQVHRCTEKSTGLPLAAKIIKVKSAKDREDVKNEINIMNQLSHVNLIQLYDAFESKHSCTLVMEYVDGGELFDRITDEKYHLTELDVVLFTRQICEGVHYLHQHYILHLDLKPENILCVNQTGHQIKIIDFGLARRYKPREKLKVNFGTPEFLAPEVVNYEFVSFPTDMWSVGVITYMLLSGLSPFLGETDAETMNFIVNCSWDFDADTFEGLSEEAKDFVSRLLVKEKSCRMSATQCLKHEWLNNLPAKASRSKTRLKSQLLLQKYIAQRKWKKHFYVVTAANRLRKFPTSP</sequence>
<feature type="chain" id="PRO_0000272200" description="Myosin light chain kinase 3">
    <location>
        <begin position="1"/>
        <end position="819"/>
    </location>
</feature>
<feature type="domain" description="Protein kinase" evidence="3">
    <location>
        <begin position="515"/>
        <end position="770"/>
    </location>
</feature>
<feature type="region of interest" description="Disordered" evidence="5">
    <location>
        <begin position="146"/>
        <end position="256"/>
    </location>
</feature>
<feature type="region of interest" description="Disordered" evidence="5">
    <location>
        <begin position="273"/>
        <end position="334"/>
    </location>
</feature>
<feature type="region of interest" description="Disordered" evidence="5">
    <location>
        <begin position="347"/>
        <end position="462"/>
    </location>
</feature>
<feature type="compositionally biased region" description="Basic and acidic residues" evidence="5">
    <location>
        <begin position="158"/>
        <end position="170"/>
    </location>
</feature>
<feature type="compositionally biased region" description="Basic and acidic residues" evidence="5">
    <location>
        <begin position="183"/>
        <end position="196"/>
    </location>
</feature>
<feature type="compositionally biased region" description="Pro residues" evidence="5">
    <location>
        <begin position="307"/>
        <end position="318"/>
    </location>
</feature>
<feature type="active site" description="Proton acceptor" evidence="3 4">
    <location>
        <position position="636"/>
    </location>
</feature>
<feature type="binding site" evidence="3">
    <location>
        <begin position="521"/>
        <end position="529"/>
    </location>
    <ligand>
        <name>ATP</name>
        <dbReference type="ChEBI" id="CHEBI:30616"/>
    </ligand>
</feature>
<feature type="binding site" evidence="3">
    <location>
        <position position="544"/>
    </location>
    <ligand>
        <name>ATP</name>
        <dbReference type="ChEBI" id="CHEBI:30616"/>
    </ligand>
</feature>
<feature type="modified residue" description="Phosphoserine" evidence="2">
    <location>
        <position position="152"/>
    </location>
</feature>
<feature type="modified residue" description="Phosphoserine" evidence="2">
    <location>
        <position position="355"/>
    </location>
</feature>
<feature type="modified residue" description="Phosphoserine" evidence="12">
    <location>
        <position position="401"/>
    </location>
</feature>
<feature type="modified residue" description="Phosphoserine" evidence="12">
    <location>
        <position position="408"/>
    </location>
</feature>
<feature type="splice variant" id="VSP_044312" description="In isoform 2." evidence="10">
    <location>
        <begin position="1"/>
        <end position="341"/>
    </location>
</feature>
<feature type="sequence variant" id="VAR_058335" description="In dbSNP:rs9923813.">
    <original>S</original>
    <variation>T</variation>
    <location>
        <position position="70"/>
    </location>
</feature>
<feature type="sequence variant" id="VAR_058336" description="In dbSNP:rs28407821." evidence="6 9">
    <original>V</original>
    <variation>L</variation>
    <location>
        <position position="180"/>
    </location>
</feature>
<feature type="sequence variant" id="VAR_035630" description="In a colorectal cancer sample; somatic mutation; dbSNP:rs141602742." evidence="7">
    <original>G</original>
    <variation>R</variation>
    <location>
        <position position="390"/>
    </location>
</feature>
<feature type="sequence conflict" description="In Ref. 2; BAG70269." evidence="11" ref="2">
    <original>R</original>
    <variation>G</variation>
    <location>
        <position position="149"/>
    </location>
</feature>
<feature type="sequence conflict" description="In Ref. 1; CAC42766." evidence="11" ref="1">
    <original>G</original>
    <variation>R</variation>
    <location>
        <position position="199"/>
    </location>
</feature>